<proteinExistence type="inferred from homology"/>
<accession>A5VIR1</accession>
<comment type="function">
    <text evidence="1">Produces ATP from ADP in the presence of a proton gradient across the membrane. The catalytic sites are hosted primarily by the beta subunits.</text>
</comment>
<comment type="catalytic activity">
    <reaction evidence="1">
        <text>ATP + H2O + 4 H(+)(in) = ADP + phosphate + 5 H(+)(out)</text>
        <dbReference type="Rhea" id="RHEA:57720"/>
        <dbReference type="ChEBI" id="CHEBI:15377"/>
        <dbReference type="ChEBI" id="CHEBI:15378"/>
        <dbReference type="ChEBI" id="CHEBI:30616"/>
        <dbReference type="ChEBI" id="CHEBI:43474"/>
        <dbReference type="ChEBI" id="CHEBI:456216"/>
        <dbReference type="EC" id="7.1.2.2"/>
    </reaction>
</comment>
<comment type="subunit">
    <text evidence="1">F-type ATPases have 2 components, CF(1) - the catalytic core - and CF(0) - the membrane proton channel. CF(1) has five subunits: alpha(3), beta(3), gamma(1), delta(1), epsilon(1). CF(0) has three main subunits: a(1), b(2) and c(9-12). The alpha and beta chains form an alternating ring which encloses part of the gamma chain. CF(1) is attached to CF(0) by a central stalk formed by the gamma and epsilon chains, while a peripheral stalk is formed by the delta and b chains.</text>
</comment>
<comment type="subcellular location">
    <subcellularLocation>
        <location evidence="1">Cell membrane</location>
        <topology evidence="1">Peripheral membrane protein</topology>
    </subcellularLocation>
</comment>
<comment type="similarity">
    <text evidence="1">Belongs to the ATPase alpha/beta chains family.</text>
</comment>
<feature type="chain" id="PRO_1000067726" description="ATP synthase subunit beta">
    <location>
        <begin position="1"/>
        <end position="475"/>
    </location>
</feature>
<feature type="binding site" evidence="1">
    <location>
        <begin position="153"/>
        <end position="160"/>
    </location>
    <ligand>
        <name>ATP</name>
        <dbReference type="ChEBI" id="CHEBI:30616"/>
    </ligand>
</feature>
<sequence length="475" mass="51632">MSSGKVLQVIGPVVDVEFPLDEKLPEINDALKIKESDGKTLTTEVALELGDGVVRTIAMDGTDGLQRGMEVENTGASISVPVGDDTLGRVFNVLGEPVDNGPKFGPDAKRMPIHRDAPKYDDLNNATEILETGIKVIDLLAPYVRGGKIGLFGGAGVGKTVLIQELIHNIAQGHNGISVFTGVGERTREGNDMYYEMKASGVLEKTAMVYGQMNEPPGARMRVALTGLTIAEYFRDVKGQDVLLFIDNIFRFTQAGSEVSALLGRIPSAVGYQPTLATEMGQLQERITSTKKGSITSIQAVYVPADDYTDPAPATTFAHLDATTNLERRLTQIGIYPAVDPLASTSTALTPEIVGKEHYEVATQVQHVLQRYHELQDIISILGMDELSDEEKTIVARARRIQNFLSQSFSVASQFTGLPGKYVPLKETIKGFKEILAGKYDDLPEEAFRLVGPIEDVVEKAKKMKAETDEDSSED</sequence>
<evidence type="ECO:0000255" key="1">
    <source>
        <dbReference type="HAMAP-Rule" id="MF_01347"/>
    </source>
</evidence>
<name>ATPB_LIMRD</name>
<protein>
    <recommendedName>
        <fullName evidence="1">ATP synthase subunit beta</fullName>
        <ecNumber evidence="1">7.1.2.2</ecNumber>
    </recommendedName>
    <alternativeName>
        <fullName evidence="1">ATP synthase F1 sector subunit beta</fullName>
    </alternativeName>
    <alternativeName>
        <fullName evidence="1">F-ATPase subunit beta</fullName>
    </alternativeName>
</protein>
<keyword id="KW-0066">ATP synthesis</keyword>
<keyword id="KW-0067">ATP-binding</keyword>
<keyword id="KW-1003">Cell membrane</keyword>
<keyword id="KW-0139">CF(1)</keyword>
<keyword id="KW-0375">Hydrogen ion transport</keyword>
<keyword id="KW-0406">Ion transport</keyword>
<keyword id="KW-0472">Membrane</keyword>
<keyword id="KW-0547">Nucleotide-binding</keyword>
<keyword id="KW-1185">Reference proteome</keyword>
<keyword id="KW-1278">Translocase</keyword>
<keyword id="KW-0813">Transport</keyword>
<reference key="1">
    <citation type="journal article" date="2011" name="PLoS Genet.">
        <title>The evolution of host specialization in the vertebrate gut symbiont Lactobacillus reuteri.</title>
        <authorList>
            <person name="Frese S.A."/>
            <person name="Benson A.K."/>
            <person name="Tannock G.W."/>
            <person name="Loach D.M."/>
            <person name="Kim J."/>
            <person name="Zhang M."/>
            <person name="Oh P.L."/>
            <person name="Heng N.C."/>
            <person name="Patil P.B."/>
            <person name="Juge N."/>
            <person name="Mackenzie D.A."/>
            <person name="Pearson B.M."/>
            <person name="Lapidus A."/>
            <person name="Dalin E."/>
            <person name="Tice H."/>
            <person name="Goltsman E."/>
            <person name="Land M."/>
            <person name="Hauser L."/>
            <person name="Ivanova N."/>
            <person name="Kyrpides N.C."/>
            <person name="Walter J."/>
        </authorList>
    </citation>
    <scope>NUCLEOTIDE SEQUENCE [LARGE SCALE GENOMIC DNA]</scope>
    <source>
        <strain>DSM 20016</strain>
    </source>
</reference>
<organism>
    <name type="scientific">Limosilactobacillus reuteri (strain DSM 20016)</name>
    <name type="common">Lactobacillus reuteri</name>
    <dbReference type="NCBI Taxonomy" id="557436"/>
    <lineage>
        <taxon>Bacteria</taxon>
        <taxon>Bacillati</taxon>
        <taxon>Bacillota</taxon>
        <taxon>Bacilli</taxon>
        <taxon>Lactobacillales</taxon>
        <taxon>Lactobacillaceae</taxon>
        <taxon>Limosilactobacillus</taxon>
    </lineage>
</organism>
<dbReference type="EC" id="7.1.2.2" evidence="1"/>
<dbReference type="EMBL" id="CP000705">
    <property type="protein sequence ID" value="ABQ82735.1"/>
    <property type="molecule type" value="Genomic_DNA"/>
</dbReference>
<dbReference type="RefSeq" id="WP_003666573.1">
    <property type="nucleotide sequence ID" value="NZ_AZDD01000022.1"/>
</dbReference>
<dbReference type="SMR" id="A5VIR1"/>
<dbReference type="STRING" id="557436.Lreu_0467"/>
<dbReference type="GeneID" id="77192078"/>
<dbReference type="KEGG" id="lre:Lreu_0467"/>
<dbReference type="PATRIC" id="fig|557436.17.peg.841"/>
<dbReference type="eggNOG" id="COG0055">
    <property type="taxonomic scope" value="Bacteria"/>
</dbReference>
<dbReference type="HOGENOM" id="CLU_022398_0_2_9"/>
<dbReference type="Proteomes" id="UP000001991">
    <property type="component" value="Chromosome"/>
</dbReference>
<dbReference type="GO" id="GO:0005886">
    <property type="term" value="C:plasma membrane"/>
    <property type="evidence" value="ECO:0007669"/>
    <property type="project" value="UniProtKB-SubCell"/>
</dbReference>
<dbReference type="GO" id="GO:0045259">
    <property type="term" value="C:proton-transporting ATP synthase complex"/>
    <property type="evidence" value="ECO:0007669"/>
    <property type="project" value="UniProtKB-KW"/>
</dbReference>
<dbReference type="GO" id="GO:0005524">
    <property type="term" value="F:ATP binding"/>
    <property type="evidence" value="ECO:0007669"/>
    <property type="project" value="UniProtKB-UniRule"/>
</dbReference>
<dbReference type="GO" id="GO:0016887">
    <property type="term" value="F:ATP hydrolysis activity"/>
    <property type="evidence" value="ECO:0007669"/>
    <property type="project" value="InterPro"/>
</dbReference>
<dbReference type="GO" id="GO:0046933">
    <property type="term" value="F:proton-transporting ATP synthase activity, rotational mechanism"/>
    <property type="evidence" value="ECO:0007669"/>
    <property type="project" value="UniProtKB-UniRule"/>
</dbReference>
<dbReference type="CDD" id="cd18110">
    <property type="entry name" value="ATP-synt_F1_beta_C"/>
    <property type="match status" value="1"/>
</dbReference>
<dbReference type="CDD" id="cd18115">
    <property type="entry name" value="ATP-synt_F1_beta_N"/>
    <property type="match status" value="1"/>
</dbReference>
<dbReference type="CDD" id="cd01133">
    <property type="entry name" value="F1-ATPase_beta_CD"/>
    <property type="match status" value="1"/>
</dbReference>
<dbReference type="FunFam" id="1.10.1140.10:FF:000001">
    <property type="entry name" value="ATP synthase subunit beta"/>
    <property type="match status" value="1"/>
</dbReference>
<dbReference type="FunFam" id="2.40.10.170:FF:000005">
    <property type="entry name" value="ATP synthase subunit beta"/>
    <property type="match status" value="1"/>
</dbReference>
<dbReference type="FunFam" id="3.40.50.300:FF:000004">
    <property type="entry name" value="ATP synthase subunit beta"/>
    <property type="match status" value="1"/>
</dbReference>
<dbReference type="Gene3D" id="2.40.10.170">
    <property type="match status" value="1"/>
</dbReference>
<dbReference type="Gene3D" id="1.10.1140.10">
    <property type="entry name" value="Bovine Mitochondrial F1-atpase, Atp Synthase Beta Chain, Chain D, domain 3"/>
    <property type="match status" value="1"/>
</dbReference>
<dbReference type="Gene3D" id="3.40.50.300">
    <property type="entry name" value="P-loop containing nucleotide triphosphate hydrolases"/>
    <property type="match status" value="1"/>
</dbReference>
<dbReference type="HAMAP" id="MF_01347">
    <property type="entry name" value="ATP_synth_beta_bact"/>
    <property type="match status" value="1"/>
</dbReference>
<dbReference type="InterPro" id="IPR003593">
    <property type="entry name" value="AAA+_ATPase"/>
</dbReference>
<dbReference type="InterPro" id="IPR055190">
    <property type="entry name" value="ATP-synt_VA_C"/>
</dbReference>
<dbReference type="InterPro" id="IPR005722">
    <property type="entry name" value="ATP_synth_F1_bsu"/>
</dbReference>
<dbReference type="InterPro" id="IPR020003">
    <property type="entry name" value="ATPase_a/bsu_AS"/>
</dbReference>
<dbReference type="InterPro" id="IPR050053">
    <property type="entry name" value="ATPase_alpha/beta_chains"/>
</dbReference>
<dbReference type="InterPro" id="IPR004100">
    <property type="entry name" value="ATPase_F1/V1/A1_a/bsu_N"/>
</dbReference>
<dbReference type="InterPro" id="IPR036121">
    <property type="entry name" value="ATPase_F1/V1/A1_a/bsu_N_sf"/>
</dbReference>
<dbReference type="InterPro" id="IPR000194">
    <property type="entry name" value="ATPase_F1/V1/A1_a/bsu_nucl-bd"/>
</dbReference>
<dbReference type="InterPro" id="IPR024034">
    <property type="entry name" value="ATPase_F1/V1_b/a_C"/>
</dbReference>
<dbReference type="InterPro" id="IPR027417">
    <property type="entry name" value="P-loop_NTPase"/>
</dbReference>
<dbReference type="NCBIfam" id="TIGR01039">
    <property type="entry name" value="atpD"/>
    <property type="match status" value="1"/>
</dbReference>
<dbReference type="PANTHER" id="PTHR15184">
    <property type="entry name" value="ATP SYNTHASE"/>
    <property type="match status" value="1"/>
</dbReference>
<dbReference type="PANTHER" id="PTHR15184:SF71">
    <property type="entry name" value="ATP SYNTHASE SUBUNIT BETA, MITOCHONDRIAL"/>
    <property type="match status" value="1"/>
</dbReference>
<dbReference type="Pfam" id="PF00006">
    <property type="entry name" value="ATP-synt_ab"/>
    <property type="match status" value="1"/>
</dbReference>
<dbReference type="Pfam" id="PF02874">
    <property type="entry name" value="ATP-synt_ab_N"/>
    <property type="match status" value="1"/>
</dbReference>
<dbReference type="Pfam" id="PF22919">
    <property type="entry name" value="ATP-synt_VA_C"/>
    <property type="match status" value="1"/>
</dbReference>
<dbReference type="SMART" id="SM00382">
    <property type="entry name" value="AAA"/>
    <property type="match status" value="1"/>
</dbReference>
<dbReference type="SUPFAM" id="SSF47917">
    <property type="entry name" value="C-terminal domain of alpha and beta subunits of F1 ATP synthase"/>
    <property type="match status" value="1"/>
</dbReference>
<dbReference type="SUPFAM" id="SSF50615">
    <property type="entry name" value="N-terminal domain of alpha and beta subunits of F1 ATP synthase"/>
    <property type="match status" value="1"/>
</dbReference>
<dbReference type="SUPFAM" id="SSF52540">
    <property type="entry name" value="P-loop containing nucleoside triphosphate hydrolases"/>
    <property type="match status" value="1"/>
</dbReference>
<dbReference type="PROSITE" id="PS00152">
    <property type="entry name" value="ATPASE_ALPHA_BETA"/>
    <property type="match status" value="1"/>
</dbReference>
<gene>
    <name evidence="1" type="primary">atpD</name>
    <name type="ordered locus">Lreu_0467</name>
</gene>